<comment type="function">
    <text evidence="5">Cycloaraneosene synthase; part of the gene cluster that mediates the biosynthesis of sordarin and hypoxysordarin, glycoside antibiotics with a unique tetracyclic diterpene aglycone structure (PubMed:27072286). First, the geranylgeranyl diphosphate synthase sdnC constructs GGDP from farnesyl diphosphate and isopentenyl diphosphate (PubMed:27072286). The diterpene cyclase sdnA then catalyzes the cyclization of GGDP to afford cycloaraneosene (PubMed:27072286). Cycloaraneosene is then hydroxylated four times by the putative cytochrome P450 monooxygenases sdnB, sdnE, sdnF and sdnH to give a hydroxylated cycloaraneosene derivative such as cycloaraneosene-8,9,13,19-tetraol (PubMed:27072286). Although the order of the hydroxylations is unclear, at least C8, C9 and C13 of the cycloaraneosene skeleton are hydroxylated before the sordaricin formation (PubMed:27072286). Dehydration of the 13-hydroxy group of the hydroxylated cycloaraneosene derivative might be catalyzed by an unassigned hypothetical protein such as sdnG and sdnP to construct the cyclopentadiene moiety (PubMed:27072286). The FAD-dependent oxidoreductase sdnN is proposed to catalyze the oxidation at C9 of the hydroxylated cycloaraneosene derivative and also catalyze the Baeyer-Villiger oxidation to give the lactone intermediate (PubMed:27072286). The presumed lactone intermediate would be hydrolyzed to give an acrolein moiety and a carboxylate moiety (PubMed:27072286). Then, [4+2]cycloaddition would occur between the acrolein moiety and the cyclopentadiene moiety to give sordaricin (PubMed:27072286). SdnN might also be involved in the [4+2]cycloaddition after the hypothesized oxidation to accommodate the oxidized product and prompt the [4+2]cycloaddition (PubMed:27072286). GDP-6-deoxy-D-altrose may be biosynthesized from GDP-D-mannose by the putative GDP-mannose-4,6-dehydratase sdnI and the short-chain dehydrogenase sdnK (PubMed:27072286). The glycosyltransferase sdnJ catalyzes the attachment of 6-deoxy-D-altrose onto the 19-hydroxy group of sordaricin to give 4'-O-demethylsordarin (PubMed:27072286). The methyltransferase sdnD would complete the biosynthesis of sordarin (PubMed:27072286). Sordarin can be further modified into hypoxysordarin (PubMed:27072286). The unique acyl chain at the 3'-hydroxy group of hypoxysordarin would be constructed by an iterative type I PKS sdnO and the trans-acting polyketide methyltransferase sdnL. SdnL would be responsible for the introduction of an alpha-methyl group of the polyketide chain (PubMed:27072286). Alternatively, the beta-lactamase-like protein sdnR might be responsible for the cleavage and transfer of the polyketide chain from the PKS sdnO to sordarin (PubMed:27072286). Two putative cytochrome P450 monooxygenases, sdnQ and sdnT, might catalyze the epoxidations of the polyketide chain to complete the biosynthesis of hypoxysordarin (PubMed:27072286). Transcriptional regulators sdnM and sdnS are presumably encoded for the transcriptional regulation of the expression of the sdn gene cluster (PubMed:27072286).</text>
</comment>
<comment type="catalytic activity">
    <reaction evidence="5">
        <text>(2E,6E,10E)-geranylgeranyl diphosphate = cycloaraneosene + diphosphate</text>
        <dbReference type="Rhea" id="RHEA:54520"/>
        <dbReference type="ChEBI" id="CHEBI:33019"/>
        <dbReference type="ChEBI" id="CHEBI:58756"/>
        <dbReference type="ChEBI" id="CHEBI:138247"/>
        <dbReference type="EC" id="4.2.3.191"/>
    </reaction>
    <physiologicalReaction direction="left-to-right" evidence="5">
        <dbReference type="Rhea" id="RHEA:54521"/>
    </physiologicalReaction>
</comment>
<comment type="cofactor">
    <cofactor evidence="2">
        <name>Mg(2+)</name>
        <dbReference type="ChEBI" id="CHEBI:18420"/>
    </cofactor>
    <text evidence="2">Binds 3 Mg(2+) ions per subunit.</text>
</comment>
<comment type="pathway">
    <text evidence="5">Antibiotic biosynthesis.</text>
</comment>
<comment type="domain">
    <text evidence="1">The Asp-Asp-Xaa-Xaa-Asp/Glu (DDXXD/E) motif is important for the catalytic activity, presumably through binding to Mg(2+).</text>
</comment>
<comment type="similarity">
    <text evidence="7">Belongs to the terpene synthase family.</text>
</comment>
<sequence length="367" mass="41774">MSLYGLFTLATSYLPSVGGGAALAAKAQLGKARSLYVPDLFAGILSGEPTRNPHEEEVGRASEEWTKKLVKMDKRTAKILTKANFAYLVSLAAPLADEEAFRMGVDWCIWAFVFDDQFDEGPMRDKGIEAAREIIDMLATQDDTCALVDPVVHPLQYMFQSVWQRFKARNPSPGLERRWKYTHKRCLFAILKQVDATQRKITLDVDLDDYMETRRHSIGAYSLFAVVEWAHAIKAPEEAMNHPSVQTCERVAADLTWLVNDVLSYKKDLAFGVEHNLTRLLMRQGLTEQGAMDKLGQLMESNQRDWEDAIAELPHWEDEETNKEVRRYLDACAAVGRANLHWSFKSGRYLNAEQGRKVRETRIMDLP</sequence>
<name>SDNA_SORAA</name>
<dbReference type="EC" id="4.2.3.191" evidence="5"/>
<dbReference type="EMBL" id="LC079035">
    <property type="protein sequence ID" value="BAV32145.1"/>
    <property type="molecule type" value="Genomic_DNA"/>
</dbReference>
<dbReference type="SMR" id="A0A1B4XBG5"/>
<dbReference type="GlyCosmos" id="A0A1B4XBG5">
    <property type="glycosylation" value="1 site, No reported glycans"/>
</dbReference>
<dbReference type="KEGG" id="ag:BAV32145"/>
<dbReference type="BRENDA" id="4.2.3.191">
    <property type="organism ID" value="15346"/>
</dbReference>
<dbReference type="GO" id="GO:0046872">
    <property type="term" value="F:metal ion binding"/>
    <property type="evidence" value="ECO:0007669"/>
    <property type="project" value="UniProtKB-KW"/>
</dbReference>
<dbReference type="GO" id="GO:0010333">
    <property type="term" value="F:terpene synthase activity"/>
    <property type="evidence" value="ECO:0007669"/>
    <property type="project" value="InterPro"/>
</dbReference>
<dbReference type="GO" id="GO:0017000">
    <property type="term" value="P:antibiotic biosynthetic process"/>
    <property type="evidence" value="ECO:0007669"/>
    <property type="project" value="UniProtKB-KW"/>
</dbReference>
<dbReference type="GO" id="GO:0008299">
    <property type="term" value="P:isoprenoid biosynthetic process"/>
    <property type="evidence" value="ECO:0007669"/>
    <property type="project" value="UniProtKB-ARBA"/>
</dbReference>
<dbReference type="Gene3D" id="1.10.600.10">
    <property type="entry name" value="Farnesyl Diphosphate Synthase"/>
    <property type="match status" value="1"/>
</dbReference>
<dbReference type="InterPro" id="IPR008949">
    <property type="entry name" value="Isoprenoid_synthase_dom_sf"/>
</dbReference>
<dbReference type="InterPro" id="IPR034686">
    <property type="entry name" value="Terpene_cyclase-like_2"/>
</dbReference>
<dbReference type="PANTHER" id="PTHR35201:SF4">
    <property type="entry name" value="BETA-PINACENE SYNTHASE-RELATED"/>
    <property type="match status" value="1"/>
</dbReference>
<dbReference type="PANTHER" id="PTHR35201">
    <property type="entry name" value="TERPENE SYNTHASE"/>
    <property type="match status" value="1"/>
</dbReference>
<dbReference type="Pfam" id="PF19086">
    <property type="entry name" value="Terpene_syn_C_2"/>
    <property type="match status" value="1"/>
</dbReference>
<dbReference type="SFLD" id="SFLDS00005">
    <property type="entry name" value="Isoprenoid_Synthase_Type_I"/>
    <property type="match status" value="1"/>
</dbReference>
<dbReference type="SFLD" id="SFLDG01020">
    <property type="entry name" value="Terpene_Cyclase_Like_2"/>
    <property type="match status" value="1"/>
</dbReference>
<dbReference type="SUPFAM" id="SSF48576">
    <property type="entry name" value="Terpenoid synthases"/>
    <property type="match status" value="1"/>
</dbReference>
<reference key="1">
    <citation type="journal article" date="2016" name="J. Antibiot.">
        <title>Genome mining of the sordarin biosynthetic gene cluster from Sordaria araneosa Cain ATCC 36386: characterization of cycloaraneosene synthase and GDP-6-deoxyaltrose transferase.</title>
        <authorList>
            <person name="Kudo F."/>
            <person name="Matsuura Y."/>
            <person name="Hayashi T."/>
            <person name="Fukushima M."/>
            <person name="Eguchi T."/>
        </authorList>
    </citation>
    <scope>NUCLEOTIDE SEQUENCE [GENOMIC DNA]</scope>
    <scope>FUNCTION</scope>
    <scope>CATALYTIC ACTIVITY</scope>
    <scope>PATHWAY</scope>
    <source>
        <strain>ATCC 36386 / NRRL 3196</strain>
    </source>
</reference>
<protein>
    <recommendedName>
        <fullName evidence="6">Cycloaraneosene synthase sdnA</fullName>
        <ecNumber evidence="5">4.2.3.191</ecNumber>
    </recommendedName>
    <alternativeName>
        <fullName evidence="6">Diterpene cyclase sdnA</fullName>
    </alternativeName>
    <alternativeName>
        <fullName evidence="6">Sordarin/hypoxysordarin biosynthesis cluster protein A</fullName>
    </alternativeName>
</protein>
<accession>A0A1B4XBG5</accession>
<proteinExistence type="evidence at protein level"/>
<organism>
    <name type="scientific">Sordaria araneosa</name>
    <name type="common">Pleurage araneosa</name>
    <dbReference type="NCBI Taxonomy" id="573841"/>
    <lineage>
        <taxon>Eukaryota</taxon>
        <taxon>Fungi</taxon>
        <taxon>Dikarya</taxon>
        <taxon>Ascomycota</taxon>
        <taxon>Pezizomycotina</taxon>
        <taxon>Sordariomycetes</taxon>
        <taxon>Sordariomycetidae</taxon>
        <taxon>Sordariales</taxon>
        <taxon>Sordariaceae</taxon>
        <taxon>Sordaria</taxon>
    </lineage>
</organism>
<evidence type="ECO:0000250" key="1">
    <source>
        <dbReference type="UniProtKB" id="Q6WP50"/>
    </source>
</evidence>
<evidence type="ECO:0000250" key="2">
    <source>
        <dbReference type="UniProtKB" id="Q9UR08"/>
    </source>
</evidence>
<evidence type="ECO:0000255" key="3"/>
<evidence type="ECO:0000255" key="4">
    <source>
        <dbReference type="PROSITE-ProRule" id="PRU00498"/>
    </source>
</evidence>
<evidence type="ECO:0000269" key="5">
    <source>
    </source>
</evidence>
<evidence type="ECO:0000303" key="6">
    <source>
    </source>
</evidence>
<evidence type="ECO:0000305" key="7"/>
<feature type="signal peptide" evidence="3">
    <location>
        <begin position="1"/>
        <end position="24"/>
    </location>
</feature>
<feature type="chain" id="PRO_0000441048" description="Cycloaraneosene synthase sdnA">
    <location>
        <begin position="25"/>
        <end position="367"/>
    </location>
</feature>
<feature type="short sequence motif" description="DDXXD motif" evidence="1">
    <location>
        <begin position="115"/>
        <end position="119"/>
    </location>
</feature>
<feature type="binding site" evidence="2">
    <location>
        <position position="115"/>
    </location>
    <ligand>
        <name>Mg(2+)</name>
        <dbReference type="ChEBI" id="CHEBI:18420"/>
        <label>1</label>
    </ligand>
</feature>
<feature type="binding site" evidence="2">
    <location>
        <position position="115"/>
    </location>
    <ligand>
        <name>Mg(2+)</name>
        <dbReference type="ChEBI" id="CHEBI:18420"/>
        <label>2</label>
    </ligand>
</feature>
<feature type="binding site" evidence="2">
    <location>
        <position position="260"/>
    </location>
    <ligand>
        <name>Mg(2+)</name>
        <dbReference type="ChEBI" id="CHEBI:18420"/>
        <label>3</label>
    </ligand>
</feature>
<feature type="binding site" evidence="2">
    <location>
        <position position="264"/>
    </location>
    <ligand>
        <name>Mg(2+)</name>
        <dbReference type="ChEBI" id="CHEBI:18420"/>
        <label>3</label>
    </ligand>
</feature>
<feature type="glycosylation site" description="N-linked (GlcNAc...) asparagine" evidence="4">
    <location>
        <position position="276"/>
    </location>
</feature>
<gene>
    <name evidence="6" type="primary">sdnA</name>
</gene>
<keyword id="KW-0045">Antibiotic biosynthesis</keyword>
<keyword id="KW-0325">Glycoprotein</keyword>
<keyword id="KW-0456">Lyase</keyword>
<keyword id="KW-0460">Magnesium</keyword>
<keyword id="KW-0479">Metal-binding</keyword>
<keyword id="KW-0732">Signal</keyword>